<dbReference type="EC" id="1.3.1.98" evidence="1"/>
<dbReference type="EMBL" id="AM286690">
    <property type="protein sequence ID" value="CAL16507.1"/>
    <property type="molecule type" value="Genomic_DNA"/>
</dbReference>
<dbReference type="RefSeq" id="WP_011588343.1">
    <property type="nucleotide sequence ID" value="NC_008260.1"/>
</dbReference>
<dbReference type="SMR" id="Q0VQP1"/>
<dbReference type="STRING" id="393595.ABO_1059"/>
<dbReference type="KEGG" id="abo:ABO_1059"/>
<dbReference type="eggNOG" id="COG0812">
    <property type="taxonomic scope" value="Bacteria"/>
</dbReference>
<dbReference type="HOGENOM" id="CLU_035304_0_0_6"/>
<dbReference type="OrthoDB" id="9804753at2"/>
<dbReference type="UniPathway" id="UPA00219"/>
<dbReference type="Proteomes" id="UP000008871">
    <property type="component" value="Chromosome"/>
</dbReference>
<dbReference type="GO" id="GO:0005829">
    <property type="term" value="C:cytosol"/>
    <property type="evidence" value="ECO:0007669"/>
    <property type="project" value="TreeGrafter"/>
</dbReference>
<dbReference type="GO" id="GO:0071949">
    <property type="term" value="F:FAD binding"/>
    <property type="evidence" value="ECO:0007669"/>
    <property type="project" value="InterPro"/>
</dbReference>
<dbReference type="GO" id="GO:0008762">
    <property type="term" value="F:UDP-N-acetylmuramate dehydrogenase activity"/>
    <property type="evidence" value="ECO:0007669"/>
    <property type="project" value="UniProtKB-UniRule"/>
</dbReference>
<dbReference type="GO" id="GO:0051301">
    <property type="term" value="P:cell division"/>
    <property type="evidence" value="ECO:0007669"/>
    <property type="project" value="UniProtKB-KW"/>
</dbReference>
<dbReference type="GO" id="GO:0071555">
    <property type="term" value="P:cell wall organization"/>
    <property type="evidence" value="ECO:0007669"/>
    <property type="project" value="UniProtKB-KW"/>
</dbReference>
<dbReference type="GO" id="GO:0009252">
    <property type="term" value="P:peptidoglycan biosynthetic process"/>
    <property type="evidence" value="ECO:0007669"/>
    <property type="project" value="UniProtKB-UniRule"/>
</dbReference>
<dbReference type="GO" id="GO:0008360">
    <property type="term" value="P:regulation of cell shape"/>
    <property type="evidence" value="ECO:0007669"/>
    <property type="project" value="UniProtKB-KW"/>
</dbReference>
<dbReference type="Gene3D" id="3.30.465.10">
    <property type="match status" value="1"/>
</dbReference>
<dbReference type="Gene3D" id="3.90.78.10">
    <property type="entry name" value="UDP-N-acetylenolpyruvoylglucosamine reductase, C-terminal domain"/>
    <property type="match status" value="1"/>
</dbReference>
<dbReference type="Gene3D" id="3.30.43.10">
    <property type="entry name" value="Uridine Diphospho-n-acetylenolpyruvylglucosamine Reductase, domain 2"/>
    <property type="match status" value="1"/>
</dbReference>
<dbReference type="HAMAP" id="MF_00037">
    <property type="entry name" value="MurB"/>
    <property type="match status" value="1"/>
</dbReference>
<dbReference type="InterPro" id="IPR016166">
    <property type="entry name" value="FAD-bd_PCMH"/>
</dbReference>
<dbReference type="InterPro" id="IPR036318">
    <property type="entry name" value="FAD-bd_PCMH-like_sf"/>
</dbReference>
<dbReference type="InterPro" id="IPR016167">
    <property type="entry name" value="FAD-bd_PCMH_sub1"/>
</dbReference>
<dbReference type="InterPro" id="IPR016169">
    <property type="entry name" value="FAD-bd_PCMH_sub2"/>
</dbReference>
<dbReference type="InterPro" id="IPR003170">
    <property type="entry name" value="MurB"/>
</dbReference>
<dbReference type="InterPro" id="IPR011601">
    <property type="entry name" value="MurB_C"/>
</dbReference>
<dbReference type="InterPro" id="IPR036635">
    <property type="entry name" value="MurB_C_sf"/>
</dbReference>
<dbReference type="InterPro" id="IPR006094">
    <property type="entry name" value="Oxid_FAD_bind_N"/>
</dbReference>
<dbReference type="NCBIfam" id="TIGR00179">
    <property type="entry name" value="murB"/>
    <property type="match status" value="1"/>
</dbReference>
<dbReference type="NCBIfam" id="NF000755">
    <property type="entry name" value="PRK00046.1"/>
    <property type="match status" value="1"/>
</dbReference>
<dbReference type="NCBIfam" id="NF010478">
    <property type="entry name" value="PRK13903.1"/>
    <property type="match status" value="1"/>
</dbReference>
<dbReference type="PANTHER" id="PTHR21071">
    <property type="entry name" value="UDP-N-ACETYLENOLPYRUVOYLGLUCOSAMINE REDUCTASE"/>
    <property type="match status" value="1"/>
</dbReference>
<dbReference type="PANTHER" id="PTHR21071:SF4">
    <property type="entry name" value="UDP-N-ACETYLENOLPYRUVOYLGLUCOSAMINE REDUCTASE"/>
    <property type="match status" value="1"/>
</dbReference>
<dbReference type="Pfam" id="PF01565">
    <property type="entry name" value="FAD_binding_4"/>
    <property type="match status" value="1"/>
</dbReference>
<dbReference type="Pfam" id="PF02873">
    <property type="entry name" value="MurB_C"/>
    <property type="match status" value="1"/>
</dbReference>
<dbReference type="SUPFAM" id="SSF56176">
    <property type="entry name" value="FAD-binding/transporter-associated domain-like"/>
    <property type="match status" value="1"/>
</dbReference>
<dbReference type="SUPFAM" id="SSF56194">
    <property type="entry name" value="Uridine diphospho-N-Acetylenolpyruvylglucosamine reductase, MurB, C-terminal domain"/>
    <property type="match status" value="1"/>
</dbReference>
<dbReference type="PROSITE" id="PS51387">
    <property type="entry name" value="FAD_PCMH"/>
    <property type="match status" value="1"/>
</dbReference>
<sequence>MSESVPPTHTFTQIDDADLTGLNTLGLPARAQRLARPTTLDALSQVLAERNPAEPLFVIGEGSNLVICSDLPGLTLSLAIDGMSLVKQDNTHVWVAAGAGVHWDDLVAWTVEQGWQGLENLSLIPGTVGAAPFQNIGAYGVELSQLLEQVTVMDVVTAQVTHFAGNECEFAYRDSRFKSRDRGRYIITGIELRLNKMPQCNVSYGPLKARFGHLSQADILPAAVREHVIAVRQSKLPAPDVLANAGSFFKNPVVTKERGDALKRRFADLVAYTQPDGVKLAAGWLIEQAGWKGKRLGPVGMHSEQALVLVNHGNATSADVIALAEAVCADVQEKFGVALEQEPVLLP</sequence>
<protein>
    <recommendedName>
        <fullName evidence="1">UDP-N-acetylenolpyruvoylglucosamine reductase</fullName>
        <ecNumber evidence="1">1.3.1.98</ecNumber>
    </recommendedName>
    <alternativeName>
        <fullName evidence="1">UDP-N-acetylmuramate dehydrogenase</fullName>
    </alternativeName>
</protein>
<feature type="chain" id="PRO_0000332443" description="UDP-N-acetylenolpyruvoylglucosamine reductase">
    <location>
        <begin position="1"/>
        <end position="347"/>
    </location>
</feature>
<feature type="domain" description="FAD-binding PCMH-type" evidence="1">
    <location>
        <begin position="27"/>
        <end position="197"/>
    </location>
</feature>
<feature type="active site" evidence="1">
    <location>
        <position position="173"/>
    </location>
</feature>
<feature type="active site" description="Proton donor" evidence="1">
    <location>
        <position position="247"/>
    </location>
</feature>
<feature type="active site" evidence="1">
    <location>
        <position position="342"/>
    </location>
</feature>
<organism>
    <name type="scientific">Alcanivorax borkumensis (strain ATCC 700651 / DSM 11573 / NCIMB 13689 / SK2)</name>
    <dbReference type="NCBI Taxonomy" id="393595"/>
    <lineage>
        <taxon>Bacteria</taxon>
        <taxon>Pseudomonadati</taxon>
        <taxon>Pseudomonadota</taxon>
        <taxon>Gammaproteobacteria</taxon>
        <taxon>Oceanospirillales</taxon>
        <taxon>Alcanivoracaceae</taxon>
        <taxon>Alcanivorax</taxon>
    </lineage>
</organism>
<accession>Q0VQP1</accession>
<evidence type="ECO:0000255" key="1">
    <source>
        <dbReference type="HAMAP-Rule" id="MF_00037"/>
    </source>
</evidence>
<comment type="function">
    <text evidence="1">Cell wall formation.</text>
</comment>
<comment type="catalytic activity">
    <reaction evidence="1">
        <text>UDP-N-acetyl-alpha-D-muramate + NADP(+) = UDP-N-acetyl-3-O-(1-carboxyvinyl)-alpha-D-glucosamine + NADPH + H(+)</text>
        <dbReference type="Rhea" id="RHEA:12248"/>
        <dbReference type="ChEBI" id="CHEBI:15378"/>
        <dbReference type="ChEBI" id="CHEBI:57783"/>
        <dbReference type="ChEBI" id="CHEBI:58349"/>
        <dbReference type="ChEBI" id="CHEBI:68483"/>
        <dbReference type="ChEBI" id="CHEBI:70757"/>
        <dbReference type="EC" id="1.3.1.98"/>
    </reaction>
</comment>
<comment type="cofactor">
    <cofactor evidence="1">
        <name>FAD</name>
        <dbReference type="ChEBI" id="CHEBI:57692"/>
    </cofactor>
</comment>
<comment type="pathway">
    <text evidence="1">Cell wall biogenesis; peptidoglycan biosynthesis.</text>
</comment>
<comment type="subcellular location">
    <subcellularLocation>
        <location evidence="1">Cytoplasm</location>
    </subcellularLocation>
</comment>
<comment type="similarity">
    <text evidence="1">Belongs to the MurB family.</text>
</comment>
<gene>
    <name evidence="1" type="primary">murB</name>
    <name type="ordered locus">ABO_1059</name>
</gene>
<reference key="1">
    <citation type="journal article" date="2006" name="Nat. Biotechnol.">
        <title>Genome sequence of the ubiquitous hydrocarbon-degrading marine bacterium Alcanivorax borkumensis.</title>
        <authorList>
            <person name="Schneiker S."/>
            <person name="Martins dos Santos V.A.P."/>
            <person name="Bartels D."/>
            <person name="Bekel T."/>
            <person name="Brecht M."/>
            <person name="Buhrmester J."/>
            <person name="Chernikova T.N."/>
            <person name="Denaro R."/>
            <person name="Ferrer M."/>
            <person name="Gertler C."/>
            <person name="Goesmann A."/>
            <person name="Golyshina O.V."/>
            <person name="Kaminski F."/>
            <person name="Khachane A.N."/>
            <person name="Lang S."/>
            <person name="Linke B."/>
            <person name="McHardy A.C."/>
            <person name="Meyer F."/>
            <person name="Nechitaylo T."/>
            <person name="Puehler A."/>
            <person name="Regenhardt D."/>
            <person name="Rupp O."/>
            <person name="Sabirova J.S."/>
            <person name="Selbitschka W."/>
            <person name="Yakimov M.M."/>
            <person name="Timmis K.N."/>
            <person name="Vorhoelter F.-J."/>
            <person name="Weidner S."/>
            <person name="Kaiser O."/>
            <person name="Golyshin P.N."/>
        </authorList>
    </citation>
    <scope>NUCLEOTIDE SEQUENCE [LARGE SCALE GENOMIC DNA]</scope>
    <source>
        <strain>ATCC 700651 / DSM 11573 / NCIMB 13689 / SK2</strain>
    </source>
</reference>
<keyword id="KW-0131">Cell cycle</keyword>
<keyword id="KW-0132">Cell division</keyword>
<keyword id="KW-0133">Cell shape</keyword>
<keyword id="KW-0961">Cell wall biogenesis/degradation</keyword>
<keyword id="KW-0963">Cytoplasm</keyword>
<keyword id="KW-0274">FAD</keyword>
<keyword id="KW-0285">Flavoprotein</keyword>
<keyword id="KW-0521">NADP</keyword>
<keyword id="KW-0560">Oxidoreductase</keyword>
<keyword id="KW-0573">Peptidoglycan synthesis</keyword>
<keyword id="KW-1185">Reference proteome</keyword>
<proteinExistence type="inferred from homology"/>
<name>MURB_ALCBS</name>